<feature type="chain" id="PRO_1000016294" description="Glutamine--tRNA ligase">
    <location>
        <begin position="1"/>
        <end position="554"/>
    </location>
</feature>
<feature type="region of interest" description="Interaction with tRNA" evidence="1">
    <location>
        <begin position="317"/>
        <end position="324"/>
    </location>
</feature>
<feature type="short sequence motif" description="'HIGH' region" evidence="1">
    <location>
        <begin position="34"/>
        <end position="44"/>
    </location>
</feature>
<feature type="short sequence motif" description="'KMSKS' region" evidence="1">
    <location>
        <begin position="268"/>
        <end position="272"/>
    </location>
</feature>
<feature type="binding site" evidence="1">
    <location>
        <begin position="35"/>
        <end position="37"/>
    </location>
    <ligand>
        <name>ATP</name>
        <dbReference type="ChEBI" id="CHEBI:30616"/>
    </ligand>
</feature>
<feature type="binding site" evidence="1">
    <location>
        <begin position="41"/>
        <end position="47"/>
    </location>
    <ligand>
        <name>ATP</name>
        <dbReference type="ChEBI" id="CHEBI:30616"/>
    </ligand>
</feature>
<feature type="binding site" evidence="1">
    <location>
        <position position="67"/>
    </location>
    <ligand>
        <name>L-glutamine</name>
        <dbReference type="ChEBI" id="CHEBI:58359"/>
    </ligand>
</feature>
<feature type="binding site" evidence="1">
    <location>
        <position position="212"/>
    </location>
    <ligand>
        <name>L-glutamine</name>
        <dbReference type="ChEBI" id="CHEBI:58359"/>
    </ligand>
</feature>
<feature type="binding site" evidence="1">
    <location>
        <position position="231"/>
    </location>
    <ligand>
        <name>ATP</name>
        <dbReference type="ChEBI" id="CHEBI:30616"/>
    </ligand>
</feature>
<feature type="binding site" evidence="1">
    <location>
        <begin position="261"/>
        <end position="262"/>
    </location>
    <ligand>
        <name>ATP</name>
        <dbReference type="ChEBI" id="CHEBI:30616"/>
    </ligand>
</feature>
<feature type="binding site" evidence="1">
    <location>
        <begin position="269"/>
        <end position="271"/>
    </location>
    <ligand>
        <name>ATP</name>
        <dbReference type="ChEBI" id="CHEBI:30616"/>
    </ligand>
</feature>
<reference key="1">
    <citation type="journal article" date="2006" name="Mol. Microbiol.">
        <title>Role of pathogenicity island-associated integrases in the genome plasticity of uropathogenic Escherichia coli strain 536.</title>
        <authorList>
            <person name="Hochhut B."/>
            <person name="Wilde C."/>
            <person name="Balling G."/>
            <person name="Middendorf B."/>
            <person name="Dobrindt U."/>
            <person name="Brzuszkiewicz E."/>
            <person name="Gottschalk G."/>
            <person name="Carniel E."/>
            <person name="Hacker J."/>
        </authorList>
    </citation>
    <scope>NUCLEOTIDE SEQUENCE [LARGE SCALE GENOMIC DNA]</scope>
    <source>
        <strain>536 / UPEC</strain>
    </source>
</reference>
<comment type="catalytic activity">
    <reaction evidence="1">
        <text>tRNA(Gln) + L-glutamine + ATP = L-glutaminyl-tRNA(Gln) + AMP + diphosphate</text>
        <dbReference type="Rhea" id="RHEA:20121"/>
        <dbReference type="Rhea" id="RHEA-COMP:9662"/>
        <dbReference type="Rhea" id="RHEA-COMP:9681"/>
        <dbReference type="ChEBI" id="CHEBI:30616"/>
        <dbReference type="ChEBI" id="CHEBI:33019"/>
        <dbReference type="ChEBI" id="CHEBI:58359"/>
        <dbReference type="ChEBI" id="CHEBI:78442"/>
        <dbReference type="ChEBI" id="CHEBI:78521"/>
        <dbReference type="ChEBI" id="CHEBI:456215"/>
        <dbReference type="EC" id="6.1.1.18"/>
    </reaction>
</comment>
<comment type="subunit">
    <text evidence="1">Monomer.</text>
</comment>
<comment type="subcellular location">
    <subcellularLocation>
        <location evidence="1">Cytoplasm</location>
    </subcellularLocation>
</comment>
<comment type="similarity">
    <text evidence="1">Belongs to the class-I aminoacyl-tRNA synthetase family.</text>
</comment>
<organism>
    <name type="scientific">Escherichia coli O6:K15:H31 (strain 536 / UPEC)</name>
    <dbReference type="NCBI Taxonomy" id="362663"/>
    <lineage>
        <taxon>Bacteria</taxon>
        <taxon>Pseudomonadati</taxon>
        <taxon>Pseudomonadota</taxon>
        <taxon>Gammaproteobacteria</taxon>
        <taxon>Enterobacterales</taxon>
        <taxon>Enterobacteriaceae</taxon>
        <taxon>Escherichia</taxon>
    </lineage>
</organism>
<proteinExistence type="inferred from homology"/>
<sequence length="554" mass="63494">MSEAEARPTNFIRQIIDEDLASGKHTTVHTRFPPEPNGYLHIGHAKSICLNFGIAQDYKGQCNLRFDDTNPVKEDIEYVDSIKNDVEWLGFHWSGNVRYSSDYFDQLHAYAIELINKGLAYVDELTPEQIREYRGTLTQPGKNSPYRDRSVEENLALFEKMRTGGFEEGKACLRAKIDMASPFIVMRDPVLYRIKFAEHHQTGNKWCIYPMYDFTHCISDALEGITHSLCTLEFQDNRRLYDWVLDNITIPVHPRQYEFSRLNLEYTVMSKRKLNLLVTDKHVEGWDDPRMPTISGLRRRGYTAASIREFCKRIGVTKQDNTIEMASLESCIREDLNENAPRAMAVIDPVKLVIENYQGEGEMVTMPNHPNKPEMGSRQVPFSGEIWIDRADFREEANKQYKRLVLGKEVRLRNAYVIKAERVEKDAEGNITTIFCTYDADTLSKDPADGRKVKGVIHWVSAAHALPVEIRLYDRLFSVPNPGAADDFLSVINPESLVIKQGFAEPSLKDAVAGKAFQFEREGYFCLDSRHSTAEKPVFNRTVGLRDTWAKVGE</sequence>
<accession>Q0TK03</accession>
<gene>
    <name evidence="1" type="primary">glnS</name>
    <name type="ordered locus">ECP_0700</name>
</gene>
<dbReference type="EC" id="6.1.1.18" evidence="1"/>
<dbReference type="EMBL" id="CP000247">
    <property type="protein sequence ID" value="ABG68728.1"/>
    <property type="molecule type" value="Genomic_DNA"/>
</dbReference>
<dbReference type="RefSeq" id="WP_001287134.1">
    <property type="nucleotide sequence ID" value="NC_008253.1"/>
</dbReference>
<dbReference type="SMR" id="Q0TK03"/>
<dbReference type="KEGG" id="ecp:ECP_0700"/>
<dbReference type="HOGENOM" id="CLU_001882_2_3_6"/>
<dbReference type="Proteomes" id="UP000009182">
    <property type="component" value="Chromosome"/>
</dbReference>
<dbReference type="GO" id="GO:0005829">
    <property type="term" value="C:cytosol"/>
    <property type="evidence" value="ECO:0007669"/>
    <property type="project" value="TreeGrafter"/>
</dbReference>
<dbReference type="GO" id="GO:0005524">
    <property type="term" value="F:ATP binding"/>
    <property type="evidence" value="ECO:0007669"/>
    <property type="project" value="UniProtKB-UniRule"/>
</dbReference>
<dbReference type="GO" id="GO:0004819">
    <property type="term" value="F:glutamine-tRNA ligase activity"/>
    <property type="evidence" value="ECO:0007669"/>
    <property type="project" value="UniProtKB-UniRule"/>
</dbReference>
<dbReference type="GO" id="GO:0006425">
    <property type="term" value="P:glutaminyl-tRNA aminoacylation"/>
    <property type="evidence" value="ECO:0007669"/>
    <property type="project" value="InterPro"/>
</dbReference>
<dbReference type="GO" id="GO:0006424">
    <property type="term" value="P:glutamyl-tRNA aminoacylation"/>
    <property type="evidence" value="ECO:0007669"/>
    <property type="project" value="UniProtKB-UniRule"/>
</dbReference>
<dbReference type="CDD" id="cd00807">
    <property type="entry name" value="GlnRS_core"/>
    <property type="match status" value="1"/>
</dbReference>
<dbReference type="FunFam" id="1.10.1160.10:FF:000001">
    <property type="entry name" value="Glutamine--tRNA ligase"/>
    <property type="match status" value="1"/>
</dbReference>
<dbReference type="FunFam" id="2.40.240.10:FF:000001">
    <property type="entry name" value="Glutamine--tRNA ligase"/>
    <property type="match status" value="1"/>
</dbReference>
<dbReference type="FunFam" id="2.40.240.10:FF:000003">
    <property type="entry name" value="Glutamine--tRNA ligase"/>
    <property type="match status" value="1"/>
</dbReference>
<dbReference type="FunFam" id="3.90.800.10:FF:000001">
    <property type="entry name" value="Glutamine--tRNA ligase"/>
    <property type="match status" value="1"/>
</dbReference>
<dbReference type="FunFam" id="3.40.50.620:FF:000037">
    <property type="entry name" value="Glutamine--tRNA ligase cytoplasmic"/>
    <property type="match status" value="1"/>
</dbReference>
<dbReference type="Gene3D" id="1.10.1160.10">
    <property type="entry name" value="Glutamyl-trna Synthetase, Domain 2"/>
    <property type="match status" value="1"/>
</dbReference>
<dbReference type="Gene3D" id="3.90.800.10">
    <property type="entry name" value="Glutamyl-tRNA Synthetase, Domain 3"/>
    <property type="match status" value="1"/>
</dbReference>
<dbReference type="Gene3D" id="3.40.50.620">
    <property type="entry name" value="HUPs"/>
    <property type="match status" value="1"/>
</dbReference>
<dbReference type="Gene3D" id="2.40.240.10">
    <property type="entry name" value="Ribosomal Protein L25, Chain P"/>
    <property type="match status" value="2"/>
</dbReference>
<dbReference type="HAMAP" id="MF_00126">
    <property type="entry name" value="Gln_tRNA_synth"/>
    <property type="match status" value="1"/>
</dbReference>
<dbReference type="InterPro" id="IPR001412">
    <property type="entry name" value="aa-tRNA-synth_I_CS"/>
</dbReference>
<dbReference type="InterPro" id="IPR004514">
    <property type="entry name" value="Gln-tRNA-synth"/>
</dbReference>
<dbReference type="InterPro" id="IPR050132">
    <property type="entry name" value="Gln/Glu-tRNA_Ligase"/>
</dbReference>
<dbReference type="InterPro" id="IPR022861">
    <property type="entry name" value="Gln_tRNA_ligase_bac"/>
</dbReference>
<dbReference type="InterPro" id="IPR000924">
    <property type="entry name" value="Glu/Gln-tRNA-synth"/>
</dbReference>
<dbReference type="InterPro" id="IPR020058">
    <property type="entry name" value="Glu/Gln-tRNA-synth_Ib_cat-dom"/>
</dbReference>
<dbReference type="InterPro" id="IPR020059">
    <property type="entry name" value="Glu/Gln-tRNA-synth_Ib_codon-bd"/>
</dbReference>
<dbReference type="InterPro" id="IPR020061">
    <property type="entry name" value="Glu_tRNA_lig_a-bdl"/>
</dbReference>
<dbReference type="InterPro" id="IPR020056">
    <property type="entry name" value="Rbsml_bL25/Gln-tRNA_synth_N"/>
</dbReference>
<dbReference type="InterPro" id="IPR011035">
    <property type="entry name" value="Ribosomal_bL25/Gln-tRNA_synth"/>
</dbReference>
<dbReference type="InterPro" id="IPR014729">
    <property type="entry name" value="Rossmann-like_a/b/a_fold"/>
</dbReference>
<dbReference type="InterPro" id="IPR049437">
    <property type="entry name" value="tRNA-synt_1c_C2"/>
</dbReference>
<dbReference type="NCBIfam" id="TIGR00440">
    <property type="entry name" value="glnS"/>
    <property type="match status" value="1"/>
</dbReference>
<dbReference type="NCBIfam" id="NF011291">
    <property type="entry name" value="PRK14703.1"/>
    <property type="match status" value="1"/>
</dbReference>
<dbReference type="PANTHER" id="PTHR43097:SF5">
    <property type="entry name" value="GLUTAMATE--TRNA LIGASE"/>
    <property type="match status" value="1"/>
</dbReference>
<dbReference type="PANTHER" id="PTHR43097">
    <property type="entry name" value="GLUTAMINE-TRNA LIGASE"/>
    <property type="match status" value="1"/>
</dbReference>
<dbReference type="Pfam" id="PF00749">
    <property type="entry name" value="tRNA-synt_1c"/>
    <property type="match status" value="1"/>
</dbReference>
<dbReference type="Pfam" id="PF03950">
    <property type="entry name" value="tRNA-synt_1c_C"/>
    <property type="match status" value="1"/>
</dbReference>
<dbReference type="Pfam" id="PF20974">
    <property type="entry name" value="tRNA-synt_1c_C2"/>
    <property type="match status" value="1"/>
</dbReference>
<dbReference type="PRINTS" id="PR00987">
    <property type="entry name" value="TRNASYNTHGLU"/>
</dbReference>
<dbReference type="SUPFAM" id="SSF52374">
    <property type="entry name" value="Nucleotidylyl transferase"/>
    <property type="match status" value="1"/>
</dbReference>
<dbReference type="SUPFAM" id="SSF50715">
    <property type="entry name" value="Ribosomal protein L25-like"/>
    <property type="match status" value="1"/>
</dbReference>
<dbReference type="PROSITE" id="PS00178">
    <property type="entry name" value="AA_TRNA_LIGASE_I"/>
    <property type="match status" value="1"/>
</dbReference>
<protein>
    <recommendedName>
        <fullName evidence="1">Glutamine--tRNA ligase</fullName>
        <ecNumber evidence="1">6.1.1.18</ecNumber>
    </recommendedName>
    <alternativeName>
        <fullName evidence="1">Glutaminyl-tRNA synthetase</fullName>
        <shortName evidence="1">GlnRS</shortName>
    </alternativeName>
</protein>
<evidence type="ECO:0000255" key="1">
    <source>
        <dbReference type="HAMAP-Rule" id="MF_00126"/>
    </source>
</evidence>
<name>SYQ_ECOL5</name>
<keyword id="KW-0030">Aminoacyl-tRNA synthetase</keyword>
<keyword id="KW-0067">ATP-binding</keyword>
<keyword id="KW-0963">Cytoplasm</keyword>
<keyword id="KW-0436">Ligase</keyword>
<keyword id="KW-0547">Nucleotide-binding</keyword>
<keyword id="KW-0648">Protein biosynthesis</keyword>